<sequence length="334" mass="36736">MSDVMTANRRSFLAEDGKETIVRTDDLVRDFDLGHRPEGGRLVLRAVDKVSLTIRRGETLGLVGESGSGKSTIGRMLVGLLPYTSGNIELFGQKIEPRAKAAAWKPLRRRVQFVFQDPHAALNPRMRVGTAIAEPLDVAGNLTRKERSARVDELMELVGLPTSFARRFPHEFSGGQRQRIVIARALALNPEILVCDEAVASLDVSMQAQIVNLLKDLQDQLGLSYLFIAHDLAVVRAVSHRVAVLYAGQIVETGPRTALYSDPLHPYSRALLDSVPRARRGAPRSIIAGEVPSLLNKPKGCAFCPRCPKAMDICRDVPPPLRVIGDREVACHLY</sequence>
<gene>
    <name type="ordered locus">BAB2_1053</name>
</gene>
<feature type="chain" id="PRO_0000290155" description="Putative peptide import ATP-binding protein BAB2_1053">
    <location>
        <begin position="1"/>
        <end position="334"/>
    </location>
</feature>
<feature type="domain" description="ABC transporter" evidence="2">
    <location>
        <begin position="22"/>
        <end position="272"/>
    </location>
</feature>
<feature type="binding site" evidence="2">
    <location>
        <begin position="64"/>
        <end position="71"/>
    </location>
    <ligand>
        <name>ATP</name>
        <dbReference type="ChEBI" id="CHEBI:30616"/>
    </ligand>
</feature>
<name>Y1053_BRUA2</name>
<accession>Q2YJJ8</accession>
<dbReference type="EC" id="7.4.2.-"/>
<dbReference type="EMBL" id="AM040265">
    <property type="protein sequence ID" value="CAJ13219.1"/>
    <property type="molecule type" value="Genomic_DNA"/>
</dbReference>
<dbReference type="RefSeq" id="WP_002968911.1">
    <property type="nucleotide sequence ID" value="NZ_KN046823.1"/>
</dbReference>
<dbReference type="SMR" id="Q2YJJ8"/>
<dbReference type="STRING" id="359391.BAB2_1053"/>
<dbReference type="KEGG" id="bmf:BAB2_1053"/>
<dbReference type="PATRIC" id="fig|359391.11.peg.1840"/>
<dbReference type="HOGENOM" id="CLU_000604_1_23_5"/>
<dbReference type="PhylomeDB" id="Q2YJJ8"/>
<dbReference type="Proteomes" id="UP000002719">
    <property type="component" value="Chromosome II"/>
</dbReference>
<dbReference type="GO" id="GO:0005886">
    <property type="term" value="C:plasma membrane"/>
    <property type="evidence" value="ECO:0007669"/>
    <property type="project" value="UniProtKB-SubCell"/>
</dbReference>
<dbReference type="GO" id="GO:0005524">
    <property type="term" value="F:ATP binding"/>
    <property type="evidence" value="ECO:0007669"/>
    <property type="project" value="UniProtKB-KW"/>
</dbReference>
<dbReference type="GO" id="GO:0016887">
    <property type="term" value="F:ATP hydrolysis activity"/>
    <property type="evidence" value="ECO:0007669"/>
    <property type="project" value="InterPro"/>
</dbReference>
<dbReference type="GO" id="GO:0015833">
    <property type="term" value="P:peptide transport"/>
    <property type="evidence" value="ECO:0007669"/>
    <property type="project" value="UniProtKB-KW"/>
</dbReference>
<dbReference type="GO" id="GO:0015031">
    <property type="term" value="P:protein transport"/>
    <property type="evidence" value="ECO:0007669"/>
    <property type="project" value="UniProtKB-KW"/>
</dbReference>
<dbReference type="GO" id="GO:0055085">
    <property type="term" value="P:transmembrane transport"/>
    <property type="evidence" value="ECO:0007669"/>
    <property type="project" value="UniProtKB-ARBA"/>
</dbReference>
<dbReference type="CDD" id="cd03257">
    <property type="entry name" value="ABC_NikE_OppD_transporters"/>
    <property type="match status" value="1"/>
</dbReference>
<dbReference type="FunFam" id="3.40.50.300:FF:000016">
    <property type="entry name" value="Oligopeptide ABC transporter ATP-binding component"/>
    <property type="match status" value="1"/>
</dbReference>
<dbReference type="Gene3D" id="3.40.50.300">
    <property type="entry name" value="P-loop containing nucleotide triphosphate hydrolases"/>
    <property type="match status" value="1"/>
</dbReference>
<dbReference type="InterPro" id="IPR003593">
    <property type="entry name" value="AAA+_ATPase"/>
</dbReference>
<dbReference type="InterPro" id="IPR050319">
    <property type="entry name" value="ABC_transp_ATP-bind"/>
</dbReference>
<dbReference type="InterPro" id="IPR003439">
    <property type="entry name" value="ABC_transporter-like_ATP-bd"/>
</dbReference>
<dbReference type="InterPro" id="IPR017871">
    <property type="entry name" value="ABC_transporter-like_CS"/>
</dbReference>
<dbReference type="InterPro" id="IPR013563">
    <property type="entry name" value="Oligopep_ABC_C"/>
</dbReference>
<dbReference type="InterPro" id="IPR027417">
    <property type="entry name" value="P-loop_NTPase"/>
</dbReference>
<dbReference type="NCBIfam" id="TIGR01727">
    <property type="entry name" value="oligo_HPY"/>
    <property type="match status" value="1"/>
</dbReference>
<dbReference type="PANTHER" id="PTHR43776:SF7">
    <property type="entry name" value="D,D-DIPEPTIDE TRANSPORT ATP-BINDING PROTEIN DDPF-RELATED"/>
    <property type="match status" value="1"/>
</dbReference>
<dbReference type="PANTHER" id="PTHR43776">
    <property type="entry name" value="TRANSPORT ATP-BINDING PROTEIN"/>
    <property type="match status" value="1"/>
</dbReference>
<dbReference type="Pfam" id="PF00005">
    <property type="entry name" value="ABC_tran"/>
    <property type="match status" value="1"/>
</dbReference>
<dbReference type="Pfam" id="PF08352">
    <property type="entry name" value="oligo_HPY"/>
    <property type="match status" value="1"/>
</dbReference>
<dbReference type="SMART" id="SM00382">
    <property type="entry name" value="AAA"/>
    <property type="match status" value="1"/>
</dbReference>
<dbReference type="SUPFAM" id="SSF52540">
    <property type="entry name" value="P-loop containing nucleoside triphosphate hydrolases"/>
    <property type="match status" value="1"/>
</dbReference>
<dbReference type="PROSITE" id="PS00211">
    <property type="entry name" value="ABC_TRANSPORTER_1"/>
    <property type="match status" value="1"/>
</dbReference>
<dbReference type="PROSITE" id="PS50893">
    <property type="entry name" value="ABC_TRANSPORTER_2"/>
    <property type="match status" value="1"/>
</dbReference>
<proteinExistence type="inferred from homology"/>
<reference key="1">
    <citation type="journal article" date="2005" name="Infect. Immun.">
        <title>Whole-genome analyses of speciation events in pathogenic Brucellae.</title>
        <authorList>
            <person name="Chain P.S."/>
            <person name="Comerci D.J."/>
            <person name="Tolmasky M.E."/>
            <person name="Larimer F.W."/>
            <person name="Malfatti S.A."/>
            <person name="Vergez L.M."/>
            <person name="Aguero F."/>
            <person name="Land M.L."/>
            <person name="Ugalde R.A."/>
            <person name="Garcia E."/>
        </authorList>
    </citation>
    <scope>NUCLEOTIDE SEQUENCE [LARGE SCALE GENOMIC DNA]</scope>
    <source>
        <strain>2308</strain>
    </source>
</reference>
<keyword id="KW-0067">ATP-binding</keyword>
<keyword id="KW-0997">Cell inner membrane</keyword>
<keyword id="KW-1003">Cell membrane</keyword>
<keyword id="KW-0472">Membrane</keyword>
<keyword id="KW-0547">Nucleotide-binding</keyword>
<keyword id="KW-0571">Peptide transport</keyword>
<keyword id="KW-0653">Protein transport</keyword>
<keyword id="KW-1185">Reference proteome</keyword>
<keyword id="KW-1278">Translocase</keyword>
<keyword id="KW-0813">Transport</keyword>
<comment type="function">
    <text evidence="1">Probably part of an ABC transporter complex that could be involved in peptide import. Probably responsible for energy coupling to the transport system (By similarity).</text>
</comment>
<comment type="subunit">
    <text evidence="3">The complex is composed of two ATP-binding proteins (BAB2_1052 and BAB2_1053), two transmembrane proteins (BAB2_1050 and BAB2_1051) and a solute-binding protein (BAB2_1049).</text>
</comment>
<comment type="subcellular location">
    <subcellularLocation>
        <location evidence="3">Cell inner membrane</location>
        <topology evidence="3">Peripheral membrane protein</topology>
    </subcellularLocation>
</comment>
<comment type="similarity">
    <text evidence="3">Belongs to the ABC transporter superfamily.</text>
</comment>
<organism>
    <name type="scientific">Brucella abortus (strain 2308)</name>
    <dbReference type="NCBI Taxonomy" id="359391"/>
    <lineage>
        <taxon>Bacteria</taxon>
        <taxon>Pseudomonadati</taxon>
        <taxon>Pseudomonadota</taxon>
        <taxon>Alphaproteobacteria</taxon>
        <taxon>Hyphomicrobiales</taxon>
        <taxon>Brucellaceae</taxon>
        <taxon>Brucella/Ochrobactrum group</taxon>
        <taxon>Brucella</taxon>
    </lineage>
</organism>
<evidence type="ECO:0000250" key="1"/>
<evidence type="ECO:0000255" key="2">
    <source>
        <dbReference type="PROSITE-ProRule" id="PRU00434"/>
    </source>
</evidence>
<evidence type="ECO:0000305" key="3"/>
<protein>
    <recommendedName>
        <fullName>Putative peptide import ATP-binding protein BAB2_1053</fullName>
        <ecNumber>7.4.2.-</ecNumber>
    </recommendedName>
</protein>